<reference key="1">
    <citation type="journal article" date="2005" name="Genome Res.">
        <title>Complete genome sequence of the hyperthermophilic archaeon Thermococcus kodakaraensis KOD1 and comparison with Pyrococcus genomes.</title>
        <authorList>
            <person name="Fukui T."/>
            <person name="Atomi H."/>
            <person name="Kanai T."/>
            <person name="Matsumi R."/>
            <person name="Fujiwara S."/>
            <person name="Imanaka T."/>
        </authorList>
    </citation>
    <scope>NUCLEOTIDE SEQUENCE [LARGE SCALE GENOMIC DNA]</scope>
    <source>
        <strain>ATCC BAA-918 / JCM 12380 / KOD1</strain>
    </source>
</reference>
<proteinExistence type="inferred from homology"/>
<evidence type="ECO:0000255" key="1">
    <source>
        <dbReference type="HAMAP-Rule" id="MF_01264"/>
    </source>
</evidence>
<accession>Q5JJ38</accession>
<keyword id="KW-0067">ATP-binding</keyword>
<keyword id="KW-0460">Magnesium</keyword>
<keyword id="KW-0479">Metal-binding</keyword>
<keyword id="KW-0547">Nucleotide-binding</keyword>
<keyword id="KW-0548">Nucleotidyltransferase</keyword>
<keyword id="KW-1185">Reference proteome</keyword>
<keyword id="KW-0692">RNA repair</keyword>
<keyword id="KW-0694">RNA-binding</keyword>
<keyword id="KW-0808">Transferase</keyword>
<keyword id="KW-0819">tRNA processing</keyword>
<sequence length="456" mass="52982">MEMEEVIAEVLQKIVPTEEERAFVKELIGELEGIAREKAQELGLEVKPYFVGSLAKDTYLAGDHDVDLFLAFPLDTPLEEVRERGLELGKEIGKTLGEYEIAYAEHPYVRAKYRDVKVDLVPCYDVRDWKDVRTAVDRSILHTKWVNENLNGKNNEVRLLKRFLKGIKAYGSEIYVRGFSGYLSEILVIKYGSFVEVLEKADFILRQKVVDPAGWLKREPEIAMKTVRREVEEDKPLVVIDPVDPRRNVAANLSWEKYGRFYFKADEFLQRPSLEFFFPTGKTGGDYLAELRRKGTHLITLLFDVPEMVDDLLFPQLERSARGFEKALSREGFEVLGWNTGRYGAEKAFVMLELDRVERPRVKIHPGPEFFTERGRDFYRKNERVWLVGKRLYAEKRVKENIIDVVRELLEKNQVALGKNLRETVKGAEILVDYVPRPLENEAYLFLSREKEGLKH</sequence>
<protein>
    <recommendedName>
        <fullName evidence="1">CCA-adding enzyme</fullName>
        <ecNumber evidence="1">2.7.7.72</ecNumber>
    </recommendedName>
    <alternativeName>
        <fullName evidence="1">CCA tRNA nucleotidyltransferase</fullName>
    </alternativeName>
    <alternativeName>
        <fullName evidence="1">tRNA CCA-pyrophosphorylase</fullName>
    </alternativeName>
    <alternativeName>
        <fullName evidence="1">tRNA adenylyl-/cytidylyl- transferase</fullName>
    </alternativeName>
    <alternativeName>
        <fullName evidence="1">tRNA nucleotidyltransferase</fullName>
    </alternativeName>
    <alternativeName>
        <fullName evidence="1">tRNA-NT</fullName>
    </alternativeName>
</protein>
<feature type="chain" id="PRO_0000139080" description="CCA-adding enzyme">
    <location>
        <begin position="1"/>
        <end position="456"/>
    </location>
</feature>
<feature type="binding site" evidence="1">
    <location>
        <position position="53"/>
    </location>
    <ligand>
        <name>ATP</name>
        <dbReference type="ChEBI" id="CHEBI:30616"/>
    </ligand>
</feature>
<feature type="binding site" evidence="1">
    <location>
        <position position="53"/>
    </location>
    <ligand>
        <name>CTP</name>
        <dbReference type="ChEBI" id="CHEBI:37563"/>
    </ligand>
</feature>
<feature type="binding site" evidence="1">
    <location>
        <position position="56"/>
    </location>
    <ligand>
        <name>ATP</name>
        <dbReference type="ChEBI" id="CHEBI:30616"/>
    </ligand>
</feature>
<feature type="binding site" evidence="1">
    <location>
        <position position="56"/>
    </location>
    <ligand>
        <name>CTP</name>
        <dbReference type="ChEBI" id="CHEBI:37563"/>
    </ligand>
</feature>
<feature type="binding site" evidence="1">
    <location>
        <position position="65"/>
    </location>
    <ligand>
        <name>Mg(2+)</name>
        <dbReference type="ChEBI" id="CHEBI:18420"/>
    </ligand>
</feature>
<feature type="binding site" evidence="1">
    <location>
        <position position="67"/>
    </location>
    <ligand>
        <name>Mg(2+)</name>
        <dbReference type="ChEBI" id="CHEBI:18420"/>
    </ligand>
</feature>
<feature type="binding site" evidence="1">
    <location>
        <position position="119"/>
    </location>
    <ligand>
        <name>Mg(2+)</name>
        <dbReference type="ChEBI" id="CHEBI:18420"/>
    </ligand>
</feature>
<feature type="binding site" evidence="1">
    <location>
        <position position="142"/>
    </location>
    <ligand>
        <name>ATP</name>
        <dbReference type="ChEBI" id="CHEBI:30616"/>
    </ligand>
</feature>
<feature type="binding site" evidence="1">
    <location>
        <position position="142"/>
    </location>
    <ligand>
        <name>CTP</name>
        <dbReference type="ChEBI" id="CHEBI:37563"/>
    </ligand>
</feature>
<feature type="binding site" evidence="1">
    <location>
        <position position="161"/>
    </location>
    <ligand>
        <name>ATP</name>
        <dbReference type="ChEBI" id="CHEBI:30616"/>
    </ligand>
</feature>
<feature type="binding site" evidence="1">
    <location>
        <position position="161"/>
    </location>
    <ligand>
        <name>CTP</name>
        <dbReference type="ChEBI" id="CHEBI:37563"/>
    </ligand>
</feature>
<feature type="binding site" evidence="1">
    <location>
        <position position="170"/>
    </location>
    <ligand>
        <name>ATP</name>
        <dbReference type="ChEBI" id="CHEBI:30616"/>
    </ligand>
</feature>
<feature type="binding site" evidence="1">
    <location>
        <position position="170"/>
    </location>
    <ligand>
        <name>CTP</name>
        <dbReference type="ChEBI" id="CHEBI:37563"/>
    </ligand>
</feature>
<name>CCA_THEKO</name>
<gene>
    <name evidence="1" type="primary">cca</name>
    <name type="ordered locus">TK1741</name>
</gene>
<dbReference type="EC" id="2.7.7.72" evidence="1"/>
<dbReference type="EMBL" id="AP006878">
    <property type="protein sequence ID" value="BAD85930.1"/>
    <property type="molecule type" value="Genomic_DNA"/>
</dbReference>
<dbReference type="RefSeq" id="WP_011250692.1">
    <property type="nucleotide sequence ID" value="NC_006624.1"/>
</dbReference>
<dbReference type="SMR" id="Q5JJ38"/>
<dbReference type="FunCoup" id="Q5JJ38">
    <property type="interactions" value="5"/>
</dbReference>
<dbReference type="STRING" id="69014.TK1741"/>
<dbReference type="EnsemblBacteria" id="BAD85930">
    <property type="protein sequence ID" value="BAD85930"/>
    <property type="gene ID" value="TK1741"/>
</dbReference>
<dbReference type="GeneID" id="78448271"/>
<dbReference type="KEGG" id="tko:TK1741"/>
<dbReference type="PATRIC" id="fig|69014.16.peg.1698"/>
<dbReference type="eggNOG" id="arCOG04249">
    <property type="taxonomic scope" value="Archaea"/>
</dbReference>
<dbReference type="HOGENOM" id="CLU_044679_1_0_2"/>
<dbReference type="InParanoid" id="Q5JJ38"/>
<dbReference type="OrthoDB" id="7378at2157"/>
<dbReference type="PhylomeDB" id="Q5JJ38"/>
<dbReference type="Proteomes" id="UP000000536">
    <property type="component" value="Chromosome"/>
</dbReference>
<dbReference type="GO" id="GO:0005524">
    <property type="term" value="F:ATP binding"/>
    <property type="evidence" value="ECO:0007669"/>
    <property type="project" value="UniProtKB-UniRule"/>
</dbReference>
<dbReference type="GO" id="GO:0004810">
    <property type="term" value="F:CCA tRNA nucleotidyltransferase activity"/>
    <property type="evidence" value="ECO:0007669"/>
    <property type="project" value="UniProtKB-UniRule"/>
</dbReference>
<dbReference type="GO" id="GO:0000287">
    <property type="term" value="F:magnesium ion binding"/>
    <property type="evidence" value="ECO:0007669"/>
    <property type="project" value="UniProtKB-UniRule"/>
</dbReference>
<dbReference type="GO" id="GO:0000049">
    <property type="term" value="F:tRNA binding"/>
    <property type="evidence" value="ECO:0007669"/>
    <property type="project" value="UniProtKB-UniRule"/>
</dbReference>
<dbReference type="GO" id="GO:0042245">
    <property type="term" value="P:RNA repair"/>
    <property type="evidence" value="ECO:0007669"/>
    <property type="project" value="UniProtKB-KW"/>
</dbReference>
<dbReference type="GO" id="GO:0001680">
    <property type="term" value="P:tRNA 3'-terminal CCA addition"/>
    <property type="evidence" value="ECO:0007669"/>
    <property type="project" value="UniProtKB-UniRule"/>
</dbReference>
<dbReference type="CDD" id="cd05400">
    <property type="entry name" value="NT_2-5OAS_ClassI-CCAase"/>
    <property type="match status" value="1"/>
</dbReference>
<dbReference type="Gene3D" id="3.30.70.1550">
    <property type="entry name" value="Archaeal tRNA CCA-adding enzyme catalytic domain"/>
    <property type="match status" value="1"/>
</dbReference>
<dbReference type="Gene3D" id="3.30.460.10">
    <property type="entry name" value="Beta Polymerase, domain 2"/>
    <property type="match status" value="1"/>
</dbReference>
<dbReference type="Gene3D" id="1.10.1410.30">
    <property type="entry name" value="CCA tRNA nucleotidyltransferase, domain 2"/>
    <property type="match status" value="1"/>
</dbReference>
<dbReference type="Gene3D" id="3.30.70.590">
    <property type="entry name" value="Poly(A) polymerase predicted RNA binding domain"/>
    <property type="match status" value="1"/>
</dbReference>
<dbReference type="HAMAP" id="MF_01264">
    <property type="entry name" value="CCA_arch"/>
    <property type="match status" value="1"/>
</dbReference>
<dbReference type="InterPro" id="IPR048833">
    <property type="entry name" value="CAA_C"/>
</dbReference>
<dbReference type="InterPro" id="IPR008229">
    <property type="entry name" value="CCA-adding_arc"/>
</dbReference>
<dbReference type="InterPro" id="IPR042090">
    <property type="entry name" value="CCA_tRNA_nucleotrans_2"/>
</dbReference>
<dbReference type="InterPro" id="IPR006116">
    <property type="entry name" value="NT_2-5OAS_ClassI-CCAase"/>
</dbReference>
<dbReference type="InterPro" id="IPR043519">
    <property type="entry name" value="NT_sf"/>
</dbReference>
<dbReference type="InterPro" id="IPR011068">
    <property type="entry name" value="NuclTrfase_I-like_C"/>
</dbReference>
<dbReference type="InterPro" id="IPR002934">
    <property type="entry name" value="Polymerase_NTP_transf_dom"/>
</dbReference>
<dbReference type="InterPro" id="IPR015329">
    <property type="entry name" value="tRNA_NucTransf2"/>
</dbReference>
<dbReference type="NCBIfam" id="TIGR03671">
    <property type="entry name" value="cca_archaeal"/>
    <property type="match status" value="1"/>
</dbReference>
<dbReference type="PANTHER" id="PTHR39643">
    <property type="entry name" value="CCA-ADDING ENZYME"/>
    <property type="match status" value="1"/>
</dbReference>
<dbReference type="PANTHER" id="PTHR39643:SF1">
    <property type="entry name" value="CCA-ADDING ENZYME"/>
    <property type="match status" value="1"/>
</dbReference>
<dbReference type="Pfam" id="PF21133">
    <property type="entry name" value="CAA_C"/>
    <property type="match status" value="1"/>
</dbReference>
<dbReference type="Pfam" id="PF01909">
    <property type="entry name" value="NTP_transf_2"/>
    <property type="match status" value="1"/>
</dbReference>
<dbReference type="Pfam" id="PF09249">
    <property type="entry name" value="tRNA_NucTransf2"/>
    <property type="match status" value="1"/>
</dbReference>
<dbReference type="PIRSF" id="PIRSF005335">
    <property type="entry name" value="CCA_arch"/>
    <property type="match status" value="1"/>
</dbReference>
<dbReference type="SUPFAM" id="SSF81301">
    <property type="entry name" value="Nucleotidyltransferase"/>
    <property type="match status" value="1"/>
</dbReference>
<dbReference type="SUPFAM" id="SSF55003">
    <property type="entry name" value="PAP/Archaeal CCA-adding enzyme, C-terminal domain"/>
    <property type="match status" value="1"/>
</dbReference>
<dbReference type="SUPFAM" id="SSF81631">
    <property type="entry name" value="PAP/OAS1 substrate-binding domain"/>
    <property type="match status" value="1"/>
</dbReference>
<comment type="function">
    <text evidence="1">Catalyzes the addition and repair of the essential 3'-terminal CCA sequence in tRNAs without using a nucleic acid template. Adds these three nucleotides in the order of C, C, and A to the tRNA nucleotide-73, using CTP and ATP as substrates and producing inorganic pyrophosphate. tRNA 3'-terminal CCA addition is required both for tRNA processing and repair. Also involved in tRNA surveillance by mediating tandem CCA addition to generate a CCACCA at the 3' terminus of unstable tRNAs. While stable tRNAs receive only 3'-terminal CCA, unstable tRNAs are marked with CCACCA and rapidly degraded.</text>
</comment>
<comment type="catalytic activity">
    <reaction evidence="1">
        <text>a tRNA precursor + 2 CTP + ATP = a tRNA with a 3' CCA end + 3 diphosphate</text>
        <dbReference type="Rhea" id="RHEA:14433"/>
        <dbReference type="Rhea" id="RHEA-COMP:10465"/>
        <dbReference type="Rhea" id="RHEA-COMP:10468"/>
        <dbReference type="ChEBI" id="CHEBI:30616"/>
        <dbReference type="ChEBI" id="CHEBI:33019"/>
        <dbReference type="ChEBI" id="CHEBI:37563"/>
        <dbReference type="ChEBI" id="CHEBI:74896"/>
        <dbReference type="ChEBI" id="CHEBI:83071"/>
        <dbReference type="EC" id="2.7.7.72"/>
    </reaction>
</comment>
<comment type="catalytic activity">
    <reaction evidence="1">
        <text>a tRNA with a 3' CCA end + 2 CTP + ATP = a tRNA with a 3' CCACCA end + 3 diphosphate</text>
        <dbReference type="Rhea" id="RHEA:76235"/>
        <dbReference type="Rhea" id="RHEA-COMP:10468"/>
        <dbReference type="Rhea" id="RHEA-COMP:18655"/>
        <dbReference type="ChEBI" id="CHEBI:30616"/>
        <dbReference type="ChEBI" id="CHEBI:33019"/>
        <dbReference type="ChEBI" id="CHEBI:37563"/>
        <dbReference type="ChEBI" id="CHEBI:83071"/>
        <dbReference type="ChEBI" id="CHEBI:195187"/>
    </reaction>
    <physiologicalReaction direction="left-to-right" evidence="1">
        <dbReference type="Rhea" id="RHEA:76236"/>
    </physiologicalReaction>
</comment>
<comment type="cofactor">
    <cofactor evidence="1">
        <name>Mg(2+)</name>
        <dbReference type="ChEBI" id="CHEBI:18420"/>
    </cofactor>
</comment>
<comment type="subunit">
    <text evidence="1">Homodimer.</text>
</comment>
<comment type="miscellaneous">
    <text evidence="1">A single active site specifically recognizes both ATP and CTP and is responsible for their addition.</text>
</comment>
<comment type="similarity">
    <text evidence="1">Belongs to the tRNA nucleotidyltransferase/poly(A) polymerase family. Archaeal CCA-adding enzyme subfamily.</text>
</comment>
<organism>
    <name type="scientific">Thermococcus kodakarensis (strain ATCC BAA-918 / JCM 12380 / KOD1)</name>
    <name type="common">Pyrococcus kodakaraensis (strain KOD1)</name>
    <dbReference type="NCBI Taxonomy" id="69014"/>
    <lineage>
        <taxon>Archaea</taxon>
        <taxon>Methanobacteriati</taxon>
        <taxon>Methanobacteriota</taxon>
        <taxon>Thermococci</taxon>
        <taxon>Thermococcales</taxon>
        <taxon>Thermococcaceae</taxon>
        <taxon>Thermococcus</taxon>
    </lineage>
</organism>